<gene>
    <name evidence="6" type="primary">bcrR</name>
</gene>
<evidence type="ECO:0000255" key="1"/>
<evidence type="ECO:0000255" key="2">
    <source>
        <dbReference type="PROSITE-ProRule" id="PRU00257"/>
    </source>
</evidence>
<evidence type="ECO:0000269" key="3">
    <source>
    </source>
</evidence>
<evidence type="ECO:0000269" key="4">
    <source>
    </source>
</evidence>
<evidence type="ECO:0000269" key="5">
    <source>
    </source>
</evidence>
<evidence type="ECO:0000303" key="6">
    <source>
    </source>
</evidence>
<evidence type="ECO:0000305" key="7"/>
<evidence type="ECO:0000305" key="8">
    <source>
    </source>
</evidence>
<reference key="1">
    <citation type="journal article" date="2004" name="Antimicrob. Agents Chemother.">
        <title>Acquired bacitracin resistance in Enterococcus faecalis is mediated by an ABC transporter and a novel regulatory protein, BcrR.</title>
        <authorList>
            <person name="Manson J.M."/>
            <person name="Keis S."/>
            <person name="Smith J.M.B."/>
            <person name="Cook G.M."/>
        </authorList>
    </citation>
    <scope>NUCLEOTIDE SEQUENCE [GENOMIC DNA]</scope>
    <scope>FUNCTION</scope>
    <source>
        <strain>AR01/DGVS</strain>
    </source>
</reference>
<reference key="2">
    <citation type="journal article" date="2008" name="J. Biol. Chem.">
        <title>Molecular analysis of BcrR, a membrane-bound bacitracin sensor and DNA-binding protein from Enterococcus faecalis.</title>
        <authorList>
            <person name="Gauntlett J.C."/>
            <person name="Gebhard S."/>
            <person name="Keis S."/>
            <person name="Manson J.M."/>
            <person name="Pos K.M."/>
            <person name="Cook G.M."/>
        </authorList>
    </citation>
    <scope>PROTEIN SEQUENCE OF 1-10</scope>
    <scope>FUNCTION</scope>
    <scope>DNA-BINDING</scope>
    <scope>ACTIVITY REGULATION</scope>
    <scope>SUBCELLULAR LOCATION</scope>
    <scope>DOMAIN</scope>
    <source>
        <strain>AR01/DGVS</strain>
    </source>
</reference>
<reference key="3">
    <citation type="journal article" date="2019" name="Microbiology">
        <title>Functional characterization of BcrR: a one-component transmembrane signal transduction system for bacitracin resistance.</title>
        <authorList>
            <person name="Darnell R.L."/>
            <person name="Nakatani Y."/>
            <person name="Knottenbelt M.K."/>
            <person name="Gebhard S."/>
            <person name="Cook G.M."/>
        </authorList>
    </citation>
    <scope>FUNCTION</scope>
    <scope>ACTIVITY REGULATION</scope>
    <scope>SUBCELLULAR LOCATION</scope>
    <scope>DOMAIN</scope>
    <scope>MUTAGENESIS OF ARG-11; SER-33; GLY-64; GLU-179 AND THR-183</scope>
</reference>
<feature type="chain" id="PRO_0000447368" description="HTH-type transcriptional activator BcrR">
    <location>
        <begin position="1"/>
        <end position="204"/>
    </location>
</feature>
<feature type="topological domain" description="Cytoplasmic" evidence="8">
    <location>
        <begin position="1"/>
        <end position="81"/>
    </location>
</feature>
<feature type="transmembrane region" description="Helical" evidence="1">
    <location>
        <begin position="82"/>
        <end position="102"/>
    </location>
</feature>
<feature type="topological domain" description="Extracellular" evidence="8">
    <location>
        <begin position="103"/>
        <end position="126"/>
    </location>
</feature>
<feature type="transmembrane region" description="Helical" evidence="1">
    <location>
        <begin position="127"/>
        <end position="147"/>
    </location>
</feature>
<feature type="topological domain" description="Cytoplasmic" evidence="8">
    <location>
        <begin position="148"/>
        <end position="154"/>
    </location>
</feature>
<feature type="transmembrane region" description="Helical" evidence="1">
    <location>
        <begin position="155"/>
        <end position="175"/>
    </location>
</feature>
<feature type="topological domain" description="Extracellular" evidence="8">
    <location>
        <begin position="176"/>
        <end position="181"/>
    </location>
</feature>
<feature type="transmembrane region" description="Helical" evidence="1">
    <location>
        <begin position="182"/>
        <end position="202"/>
    </location>
</feature>
<feature type="topological domain" description="Cytoplasmic" evidence="8">
    <location>
        <begin position="203"/>
        <end position="204"/>
    </location>
</feature>
<feature type="domain" description="HTH cro/C1-type" evidence="2">
    <location>
        <begin position="7"/>
        <end position="61"/>
    </location>
</feature>
<feature type="DNA-binding region" description="H-T-H motif" evidence="2">
    <location>
        <begin position="18"/>
        <end position="37"/>
    </location>
</feature>
<feature type="mutagenesis site" description="Loss of activity. Does not affect DNA-binding and cellular localization." evidence="5">
    <original>R</original>
    <variation>K</variation>
    <location>
        <position position="11"/>
    </location>
</feature>
<feature type="mutagenesis site" description="Loss of activity. Does not affect DNA-binding and cellular localization." evidence="5">
    <original>S</original>
    <variation>L</variation>
    <location>
        <position position="33"/>
    </location>
</feature>
<feature type="mutagenesis site" description="Constitutively active. Does not affect DNA-binding and cellular localization." evidence="5">
    <original>G</original>
    <variation>D</variation>
    <location>
        <position position="64"/>
    </location>
</feature>
<feature type="mutagenesis site" description="Loss of activity." evidence="5">
    <original>G</original>
    <variation>S</variation>
    <location>
        <position position="64"/>
    </location>
</feature>
<feature type="mutagenesis site" description="Loss of activity. Does not affect DNA-binding and cellular localization." evidence="5">
    <original>E</original>
    <variation>K</variation>
    <location>
        <position position="179"/>
    </location>
</feature>
<feature type="mutagenesis site" description="Loss of activity. Does not affect DNA-binding and cellular localization." evidence="5">
    <original>T</original>
    <variation>M</variation>
    <location>
        <position position="183"/>
    </location>
</feature>
<keyword id="KW-0010">Activator</keyword>
<keyword id="KW-0046">Antibiotic resistance</keyword>
<keyword id="KW-1003">Cell membrane</keyword>
<keyword id="KW-0903">Direct protein sequencing</keyword>
<keyword id="KW-0238">DNA-binding</keyword>
<keyword id="KW-0472">Membrane</keyword>
<keyword id="KW-0614">Plasmid</keyword>
<keyword id="KW-0804">Transcription</keyword>
<keyword id="KW-0805">Transcription regulation</keyword>
<keyword id="KW-0812">Transmembrane</keyword>
<keyword id="KW-1133">Transmembrane helix</keyword>
<dbReference type="EMBL" id="AY496968">
    <property type="protein sequence ID" value="AAS78452.1"/>
    <property type="molecule type" value="Genomic_DNA"/>
</dbReference>
<dbReference type="RefSeq" id="WP_002367752.1">
    <property type="nucleotide sequence ID" value="NZ_JAKTAU010000029.1"/>
</dbReference>
<dbReference type="SMR" id="Q5WNW9"/>
<dbReference type="GO" id="GO:0005886">
    <property type="term" value="C:plasma membrane"/>
    <property type="evidence" value="ECO:0007669"/>
    <property type="project" value="UniProtKB-SubCell"/>
</dbReference>
<dbReference type="GO" id="GO:0003677">
    <property type="term" value="F:DNA binding"/>
    <property type="evidence" value="ECO:0007669"/>
    <property type="project" value="UniProtKB-KW"/>
</dbReference>
<dbReference type="GO" id="GO:0046677">
    <property type="term" value="P:response to antibiotic"/>
    <property type="evidence" value="ECO:0007669"/>
    <property type="project" value="UniProtKB-KW"/>
</dbReference>
<dbReference type="CDD" id="cd00093">
    <property type="entry name" value="HTH_XRE"/>
    <property type="match status" value="1"/>
</dbReference>
<dbReference type="Gene3D" id="1.10.260.40">
    <property type="entry name" value="lambda repressor-like DNA-binding domains"/>
    <property type="match status" value="1"/>
</dbReference>
<dbReference type="InterPro" id="IPR001387">
    <property type="entry name" value="Cro/C1-type_HTH"/>
</dbReference>
<dbReference type="InterPro" id="IPR010982">
    <property type="entry name" value="Lambda_DNA-bd_dom_sf"/>
</dbReference>
<dbReference type="PANTHER" id="PTHR46558:SF4">
    <property type="entry name" value="DNA-BIDING PHAGE PROTEIN"/>
    <property type="match status" value="1"/>
</dbReference>
<dbReference type="PANTHER" id="PTHR46558">
    <property type="entry name" value="TRACRIPTIONAL REGULATORY PROTEIN-RELATED-RELATED"/>
    <property type="match status" value="1"/>
</dbReference>
<dbReference type="Pfam" id="PF01381">
    <property type="entry name" value="HTH_3"/>
    <property type="match status" value="1"/>
</dbReference>
<dbReference type="SMART" id="SM00530">
    <property type="entry name" value="HTH_XRE"/>
    <property type="match status" value="1"/>
</dbReference>
<dbReference type="SUPFAM" id="SSF47413">
    <property type="entry name" value="lambda repressor-like DNA-binding domains"/>
    <property type="match status" value="1"/>
</dbReference>
<dbReference type="PROSITE" id="PS50943">
    <property type="entry name" value="HTH_CROC1"/>
    <property type="match status" value="1"/>
</dbReference>
<sequence>MEFNEKLQQLRTGKNLTQEQLAEQLYVSRTAISKWESGKGYPNMESLKCISKFFSVTIDELLSGEELITLAETENRSNLKKIYNYIYGILDMMAVAFIFLPLYGNSVGGYVYAVNLLSFTATTPFNLAVYWSAFAALIIIGIGKIISTHLDKEKWGGIATKCSLTITALAVCFFAAAREPYITVLVFLLLIGKIFVWIKQMGMK</sequence>
<proteinExistence type="evidence at protein level"/>
<organism>
    <name type="scientific">Enterococcus faecalis</name>
    <name type="common">Streptococcus faecalis</name>
    <dbReference type="NCBI Taxonomy" id="1351"/>
    <lineage>
        <taxon>Bacteria</taxon>
        <taxon>Bacillati</taxon>
        <taxon>Bacillota</taxon>
        <taxon>Bacilli</taxon>
        <taxon>Lactobacillales</taxon>
        <taxon>Enterococcaceae</taxon>
        <taxon>Enterococcus</taxon>
    </lineage>
</organism>
<protein>
    <recommendedName>
        <fullName evidence="7">HTH-type transcriptional activator BcrR</fullName>
    </recommendedName>
</protein>
<comment type="function">
    <text evidence="3 4 5">Functions both as a membrane-bound sensor and a transducer of bacitracin availability to activate transcription of the bcrABD operon in the presence of bacitracin (PubMed:15388429, PubMed:18227063, PubMed:30777814). Binds specifically to two inverted repeat sequences on the bcrABD promoter, irrespective of bacitracin concentration (PubMed:18227063).</text>
</comment>
<comment type="activity regulation">
    <text evidence="4 5">Constitutively bound to the bcrABD promoter (PubMed:18227063, PubMed:30777814). Requires bacitracin for activation, probably through a conformational change, such as the oligomerization of inactive dimers to form active tetramers (PubMed:30777814).</text>
</comment>
<comment type="subcellular location">
    <subcellularLocation>
        <location evidence="4 5">Cell membrane</location>
        <topology evidence="1">Multi-pass membrane protein</topology>
    </subcellularLocation>
</comment>
<comment type="domain">
    <text evidence="4 5">Contains an N-terminal helix-turn-helix DNA-binding domain, an intermediate oligomerization domain and a C-terminal transmembrane domain.</text>
</comment>
<geneLocation type="plasmid">
    <name>pJM01</name>
</geneLocation>
<accession>Q5WNW9</accession>
<name>BCRR_ENTFL</name>